<feature type="chain" id="PRO_0000418827" description="Sesquiterpene synthase 31">
    <location>
        <begin position="1"/>
        <end position="555"/>
    </location>
</feature>
<feature type="short sequence motif" description="DDXXD motif" evidence="1">
    <location>
        <begin position="308"/>
        <end position="312"/>
    </location>
</feature>
<feature type="binding site" evidence="2">
    <location>
        <position position="308"/>
    </location>
    <ligand>
        <name>Mg(2+)</name>
        <dbReference type="ChEBI" id="CHEBI:18420"/>
        <label>1</label>
    </ligand>
</feature>
<feature type="binding site" evidence="2">
    <location>
        <position position="308"/>
    </location>
    <ligand>
        <name>Mg(2+)</name>
        <dbReference type="ChEBI" id="CHEBI:18420"/>
        <label>2</label>
    </ligand>
</feature>
<feature type="binding site" evidence="2">
    <location>
        <position position="312"/>
    </location>
    <ligand>
        <name>Mg(2+)</name>
        <dbReference type="ChEBI" id="CHEBI:18420"/>
        <label>1</label>
    </ligand>
</feature>
<feature type="binding site" evidence="2">
    <location>
        <position position="312"/>
    </location>
    <ligand>
        <name>Mg(2+)</name>
        <dbReference type="ChEBI" id="CHEBI:18420"/>
        <label>2</label>
    </ligand>
</feature>
<feature type="binding site" evidence="2">
    <location>
        <position position="451"/>
    </location>
    <ligand>
        <name>Mg(2+)</name>
        <dbReference type="ChEBI" id="CHEBI:18420"/>
        <label>3</label>
    </ligand>
</feature>
<feature type="binding site" evidence="2">
    <location>
        <position position="455"/>
    </location>
    <ligand>
        <name>Mg(2+)</name>
        <dbReference type="ChEBI" id="CHEBI:18420"/>
        <label>3</label>
    </ligand>
</feature>
<feature type="binding site" evidence="2">
    <location>
        <position position="459"/>
    </location>
    <ligand>
        <name>Mg(2+)</name>
        <dbReference type="ChEBI" id="CHEBI:18420"/>
        <label>3</label>
    </ligand>
</feature>
<organism>
    <name type="scientific">Solanum lycopersicum</name>
    <name type="common">Tomato</name>
    <name type="synonym">Lycopersicon esculentum</name>
    <dbReference type="NCBI Taxonomy" id="4081"/>
    <lineage>
        <taxon>Eukaryota</taxon>
        <taxon>Viridiplantae</taxon>
        <taxon>Streptophyta</taxon>
        <taxon>Embryophyta</taxon>
        <taxon>Tracheophyta</taxon>
        <taxon>Spermatophyta</taxon>
        <taxon>Magnoliopsida</taxon>
        <taxon>eudicotyledons</taxon>
        <taxon>Gunneridae</taxon>
        <taxon>Pentapetalae</taxon>
        <taxon>asterids</taxon>
        <taxon>lamiids</taxon>
        <taxon>Solanales</taxon>
        <taxon>Solanaceae</taxon>
        <taxon>Solanoideae</taxon>
        <taxon>Solaneae</taxon>
        <taxon>Solanum</taxon>
        <taxon>Solanum subgen. Lycopersicon</taxon>
    </lineage>
</organism>
<dbReference type="EC" id="4.2.3.88" evidence="4"/>
<dbReference type="EMBL" id="JN402396">
    <property type="protein sequence ID" value="AEM23833.1"/>
    <property type="molecule type" value="mRNA"/>
</dbReference>
<dbReference type="EMBL" id="JN412082">
    <property type="protein sequence ID" value="AEP82774.1"/>
    <property type="molecule type" value="Genomic_DNA"/>
</dbReference>
<dbReference type="RefSeq" id="NP_001239040.1">
    <property type="nucleotide sequence ID" value="NM_001252111.1"/>
</dbReference>
<dbReference type="SMR" id="G5CV46"/>
<dbReference type="FunCoup" id="G5CV46">
    <property type="interactions" value="20"/>
</dbReference>
<dbReference type="STRING" id="4081.G5CV46"/>
<dbReference type="PaxDb" id="4081-Solyc01g101170.2.1"/>
<dbReference type="GeneID" id="100820700"/>
<dbReference type="KEGG" id="sly:100820700"/>
<dbReference type="eggNOG" id="ENOG502QUCN">
    <property type="taxonomic scope" value="Eukaryota"/>
</dbReference>
<dbReference type="HOGENOM" id="CLU_003125_7_2_1"/>
<dbReference type="InParanoid" id="G5CV46"/>
<dbReference type="OrthoDB" id="1877784at2759"/>
<dbReference type="PhylomeDB" id="G5CV46"/>
<dbReference type="UniPathway" id="UPA00213"/>
<dbReference type="Proteomes" id="UP000004994">
    <property type="component" value="Unplaced"/>
</dbReference>
<dbReference type="GO" id="GO:0005737">
    <property type="term" value="C:cytoplasm"/>
    <property type="evidence" value="ECO:0007669"/>
    <property type="project" value="UniProtKB-SubCell"/>
</dbReference>
<dbReference type="GO" id="GO:0000287">
    <property type="term" value="F:magnesium ion binding"/>
    <property type="evidence" value="ECO:0007669"/>
    <property type="project" value="InterPro"/>
</dbReference>
<dbReference type="GO" id="GO:0010333">
    <property type="term" value="F:terpene synthase activity"/>
    <property type="evidence" value="ECO:0000314"/>
    <property type="project" value="UniProtKB"/>
</dbReference>
<dbReference type="GO" id="GO:0016102">
    <property type="term" value="P:diterpenoid biosynthetic process"/>
    <property type="evidence" value="ECO:0007669"/>
    <property type="project" value="InterPro"/>
</dbReference>
<dbReference type="GO" id="GO:0009753">
    <property type="term" value="P:response to jasmonic acid"/>
    <property type="evidence" value="ECO:0000270"/>
    <property type="project" value="UniProtKB"/>
</dbReference>
<dbReference type="GO" id="GO:0016114">
    <property type="term" value="P:terpenoid biosynthetic process"/>
    <property type="evidence" value="ECO:0000314"/>
    <property type="project" value="UniProtKB"/>
</dbReference>
<dbReference type="CDD" id="cd00684">
    <property type="entry name" value="Terpene_cyclase_plant_C1"/>
    <property type="match status" value="1"/>
</dbReference>
<dbReference type="FunFam" id="1.10.600.10:FF:000007">
    <property type="entry name" value="Isoprene synthase, chloroplastic"/>
    <property type="match status" value="1"/>
</dbReference>
<dbReference type="FunFam" id="1.50.10.130:FF:000001">
    <property type="entry name" value="Isoprene synthase, chloroplastic"/>
    <property type="match status" value="1"/>
</dbReference>
<dbReference type="Gene3D" id="1.10.600.10">
    <property type="entry name" value="Farnesyl Diphosphate Synthase"/>
    <property type="match status" value="1"/>
</dbReference>
<dbReference type="Gene3D" id="1.50.10.130">
    <property type="entry name" value="Terpene synthase, N-terminal domain"/>
    <property type="match status" value="1"/>
</dbReference>
<dbReference type="InterPro" id="IPR008949">
    <property type="entry name" value="Isoprenoid_synthase_dom_sf"/>
</dbReference>
<dbReference type="InterPro" id="IPR034741">
    <property type="entry name" value="Terpene_cyclase-like_1_C"/>
</dbReference>
<dbReference type="InterPro" id="IPR044814">
    <property type="entry name" value="Terpene_cyclase_plant_C1"/>
</dbReference>
<dbReference type="InterPro" id="IPR001906">
    <property type="entry name" value="Terpene_synth_N"/>
</dbReference>
<dbReference type="InterPro" id="IPR036965">
    <property type="entry name" value="Terpene_synth_N_sf"/>
</dbReference>
<dbReference type="InterPro" id="IPR050148">
    <property type="entry name" value="Terpene_synthase-like"/>
</dbReference>
<dbReference type="InterPro" id="IPR005630">
    <property type="entry name" value="Terpene_synthase_metal-bd"/>
</dbReference>
<dbReference type="InterPro" id="IPR008930">
    <property type="entry name" value="Terpenoid_cyclase/PrenylTrfase"/>
</dbReference>
<dbReference type="PANTHER" id="PTHR31225">
    <property type="entry name" value="OS04G0344100 PROTEIN-RELATED"/>
    <property type="match status" value="1"/>
</dbReference>
<dbReference type="PANTHER" id="PTHR31225:SF253">
    <property type="entry name" value="SESQUITERPENE SYNTHASE 31"/>
    <property type="match status" value="1"/>
</dbReference>
<dbReference type="Pfam" id="PF01397">
    <property type="entry name" value="Terpene_synth"/>
    <property type="match status" value="1"/>
</dbReference>
<dbReference type="Pfam" id="PF03936">
    <property type="entry name" value="Terpene_synth_C"/>
    <property type="match status" value="1"/>
</dbReference>
<dbReference type="SFLD" id="SFLDG01019">
    <property type="entry name" value="Terpene_Cyclase_Like_1_C_Termi"/>
    <property type="match status" value="1"/>
</dbReference>
<dbReference type="SFLD" id="SFLDG01604">
    <property type="entry name" value="Terpene_Cyclase_Like_1_C_Termi"/>
    <property type="match status" value="1"/>
</dbReference>
<dbReference type="SUPFAM" id="SSF48239">
    <property type="entry name" value="Terpenoid cyclases/Protein prenyltransferases"/>
    <property type="match status" value="1"/>
</dbReference>
<dbReference type="SUPFAM" id="SSF48576">
    <property type="entry name" value="Terpenoid synthases"/>
    <property type="match status" value="1"/>
</dbReference>
<name>TPS31_SOLLC</name>
<gene>
    <name evidence="5 6" type="primary">TPS31</name>
</gene>
<proteinExistence type="evidence at protein level"/>
<sequence>MAPAAALMSKCQEEEEIVRPVADFSPSLWGDRFHSFSLDNQVAEKYVEEIETLKEQTRSMLMSGKTLAEKLNLIDIVERLGIAYHFEKQIDDMLNHIFNIDPNFEAHEYNDLCTLSLQFRILRQHGYYISPKIFSRFQDANGKFKESLCDDIRGILNLYEASHVRTHGEDTLEEALAFSTAHLESAAPHLKSPLSKQVTHALEQSLHKSIPRVETRYFISIYEEEELKNDVFLRFAKLDFNLLQMLHKQELSEVSRWWKDLDFVTTLPYARDRAVECYFWTMGVYAEPQYSQARVMLAKTIAMISIVDDTFDAYGIVKELEVYTDAIQRWDVSQIDRLPEYMKISYKALLDLYNDYETELSNDGRSDVVQYAKERMKEIVRNYFVEAKWFIEGYMPPVSEYLSNALATSTYYLLTTTSYLGMKSATKKDFEWLAKNPKILEANVTLCRVIDDIATYEVEKGRGQIATGIECYMRDYGVSTQVAMDKFQEMAETAWKDVNEGILRPTPVSAKILTRILNLARIIDVTYKHNQDGYTHPEKVLKPHIIALLVDSIEI</sequence>
<evidence type="ECO:0000250" key="1">
    <source>
        <dbReference type="UniProtKB" id="A0A1C9J6A7"/>
    </source>
</evidence>
<evidence type="ECO:0000250" key="2">
    <source>
        <dbReference type="UniProtKB" id="Q40577"/>
    </source>
</evidence>
<evidence type="ECO:0000269" key="3">
    <source>
    </source>
</evidence>
<evidence type="ECO:0000269" key="4">
    <source>
    </source>
</evidence>
<evidence type="ECO:0000303" key="5">
    <source>
    </source>
</evidence>
<evidence type="ECO:0000303" key="6">
    <source>
    </source>
</evidence>
<evidence type="ECO:0000305" key="7"/>
<protein>
    <recommendedName>
        <fullName evidence="5 6">Sesquiterpene synthase 31</fullName>
        <shortName evidence="5 6">SlTPS31</shortName>
    </recommendedName>
    <alternativeName>
        <fullName evidence="6">Viridiflorene synthase TPS31</fullName>
        <ecNumber evidence="4">4.2.3.88</ecNumber>
    </alternativeName>
</protein>
<accession>G5CV46</accession>
<reference key="1">
    <citation type="journal article" date="2011" name="Plant Mol. Biol.">
        <title>RNA-seq discovery, functional characterization, and comparison of sesquiterpene synthases from Solanum lycopersicum and Solanum habrochaites trichomes.</title>
        <authorList>
            <person name="Bleeker P.M."/>
            <person name="Spyropoulou E.A."/>
            <person name="Diergaarde P.J."/>
            <person name="Volpin H."/>
            <person name="De Both M.T.J."/>
            <person name="Zerbe P."/>
            <person name="Bohlmann J."/>
            <person name="Falara V."/>
            <person name="Matsuba Y."/>
            <person name="Pichersky E."/>
            <person name="Haring M.A."/>
            <person name="Schuurink R.C."/>
        </authorList>
    </citation>
    <scope>NUCLEOTIDE SEQUENCE [MRNA]</scope>
    <scope>FUNCTION</scope>
    <scope>CATALYTIC ACTIVITY</scope>
    <scope>TISSUE SPECIFICITY</scope>
    <scope>INDUCTION BY JASMONATE</scope>
    <scope>PATHWAY</scope>
    <scope>GENE FAMILY</scope>
    <source>
        <strain>cv. Moneymaker</strain>
    </source>
</reference>
<reference key="2">
    <citation type="journal article" date="2011" name="Plant Physiol.">
        <title>The tomato terpene synthase gene family.</title>
        <authorList>
            <person name="Falara V."/>
            <person name="Akhtar T.A."/>
            <person name="Nguyen T.T.H."/>
            <person name="Spyropoulou E.A."/>
            <person name="Bleeker P.M."/>
            <person name="Schauvinhold I."/>
            <person name="Matsuba Y."/>
            <person name="Bonini M.E."/>
            <person name="Schilmiller A.L."/>
            <person name="Last R.L."/>
            <person name="Schuurink R.C."/>
            <person name="Pichersky E."/>
        </authorList>
    </citation>
    <scope>NUCLEOTIDE SEQUENCE [GENOMIC DNA]</scope>
    <scope>TISSUE SPECIFICITY</scope>
    <scope>INDUCTION BY JASMONATE</scope>
    <scope>GENE FAMILY</scope>
    <source>
        <strain>cv. M82</strain>
    </source>
</reference>
<keyword id="KW-0963">Cytoplasm</keyword>
<keyword id="KW-0456">Lyase</keyword>
<keyword id="KW-0460">Magnesium</keyword>
<keyword id="KW-0479">Metal-binding</keyword>
<keyword id="KW-1185">Reference proteome</keyword>
<comment type="function">
    <text evidence="4">Sesquiterpene synthase involved in the production of viridiflorene from (E,E)-farnesyl diphosphate (FPP) (PubMed:21818683). Has no activity with (Z,Z)-FPP (PubMed:21818683). Can act with a low efficiency as a monoterpene synthase with geranyl diphosphate as substrate (PubMed:21818683).</text>
</comment>
<comment type="catalytic activity">
    <reaction evidence="4">
        <text>(2E,6E)-farnesyl diphosphate = viridiflorene + diphosphate</text>
        <dbReference type="Rhea" id="RHEA:31811"/>
        <dbReference type="ChEBI" id="CHEBI:33019"/>
        <dbReference type="ChEBI" id="CHEBI:63444"/>
        <dbReference type="ChEBI" id="CHEBI:175763"/>
        <dbReference type="EC" id="4.2.3.88"/>
    </reaction>
    <physiologicalReaction direction="left-to-right" evidence="4">
        <dbReference type="Rhea" id="RHEA:31812"/>
    </physiologicalReaction>
</comment>
<comment type="cofactor">
    <cofactor evidence="1">
        <name>Mg(2+)</name>
        <dbReference type="ChEBI" id="CHEBI:18420"/>
    </cofactor>
    <cofactor evidence="1">
        <name>Mn(2+)</name>
        <dbReference type="ChEBI" id="CHEBI:29035"/>
    </cofactor>
    <text evidence="1">Binds 3 Mg(2+) or Mn(2+) ions per subunit.</text>
</comment>
<comment type="pathway">
    <text evidence="4">Secondary metabolite biosynthesis; terpenoid biosynthesis.</text>
</comment>
<comment type="subcellular location">
    <subcellularLocation>
        <location evidence="7">Cytoplasm</location>
    </subcellularLocation>
</comment>
<comment type="tissue specificity">
    <text evidence="3 4">Expressed in stem and leaf trichomes. Detected in roots, fruits and flowers.</text>
</comment>
<comment type="induction">
    <text evidence="3 4">Up-regulated by jasmonic acid treatment.</text>
</comment>
<comment type="domain">
    <text evidence="1">The Asp-Asp-Xaa-Xaa-Asp/Glu (DDXXD/E) motif is important for the catalytic activity, presumably through binding to Mg(2+).</text>
</comment>
<comment type="similarity">
    <text evidence="7">Belongs to the terpene synthase family. Tpsa subfamily.</text>
</comment>